<protein>
    <recommendedName>
        <fullName evidence="5">Small ribosomal subunit protein uS15</fullName>
    </recommendedName>
    <alternativeName>
        <fullName>40S ribosomal protein S13</fullName>
    </alternativeName>
</protein>
<name>RS13_SCHPO</name>
<accession>P28189</accession>
<evidence type="ECO:0000250" key="1"/>
<evidence type="ECO:0000250" key="2">
    <source>
        <dbReference type="UniProtKB" id="P05756"/>
    </source>
</evidence>
<evidence type="ECO:0000269" key="3">
    <source>
    </source>
</evidence>
<evidence type="ECO:0000269" key="4">
    <source>
    </source>
</evidence>
<evidence type="ECO:0000305" key="5"/>
<reference key="1">
    <citation type="journal article" date="1992" name="Nucleic Acids Res.">
        <title>Cloning of the gene for ribosomal protein S13 from the fission yeast Schizosaccharomyces pombe.</title>
        <authorList>
            <person name="Marks J."/>
            <person name="Simanis V."/>
        </authorList>
    </citation>
    <scope>NUCLEOTIDE SEQUENCE [GENOMIC DNA]</scope>
</reference>
<reference key="2">
    <citation type="journal article" date="2002" name="Nature">
        <title>The genome sequence of Schizosaccharomyces pombe.</title>
        <authorList>
            <person name="Wood V."/>
            <person name="Gwilliam R."/>
            <person name="Rajandream M.A."/>
            <person name="Lyne M.H."/>
            <person name="Lyne R."/>
            <person name="Stewart A."/>
            <person name="Sgouros J.G."/>
            <person name="Peat N."/>
            <person name="Hayles J."/>
            <person name="Baker S.G."/>
            <person name="Basham D."/>
            <person name="Bowman S."/>
            <person name="Brooks K."/>
            <person name="Brown D."/>
            <person name="Brown S."/>
            <person name="Chillingworth T."/>
            <person name="Churcher C.M."/>
            <person name="Collins M."/>
            <person name="Connor R."/>
            <person name="Cronin A."/>
            <person name="Davis P."/>
            <person name="Feltwell T."/>
            <person name="Fraser A."/>
            <person name="Gentles S."/>
            <person name="Goble A."/>
            <person name="Hamlin N."/>
            <person name="Harris D.E."/>
            <person name="Hidalgo J."/>
            <person name="Hodgson G."/>
            <person name="Holroyd S."/>
            <person name="Hornsby T."/>
            <person name="Howarth S."/>
            <person name="Huckle E.J."/>
            <person name="Hunt S."/>
            <person name="Jagels K."/>
            <person name="James K.D."/>
            <person name="Jones L."/>
            <person name="Jones M."/>
            <person name="Leather S."/>
            <person name="McDonald S."/>
            <person name="McLean J."/>
            <person name="Mooney P."/>
            <person name="Moule S."/>
            <person name="Mungall K.L."/>
            <person name="Murphy L.D."/>
            <person name="Niblett D."/>
            <person name="Odell C."/>
            <person name="Oliver K."/>
            <person name="O'Neil S."/>
            <person name="Pearson D."/>
            <person name="Quail M.A."/>
            <person name="Rabbinowitsch E."/>
            <person name="Rutherford K.M."/>
            <person name="Rutter S."/>
            <person name="Saunders D."/>
            <person name="Seeger K."/>
            <person name="Sharp S."/>
            <person name="Skelton J."/>
            <person name="Simmonds M.N."/>
            <person name="Squares R."/>
            <person name="Squares S."/>
            <person name="Stevens K."/>
            <person name="Taylor K."/>
            <person name="Taylor R.G."/>
            <person name="Tivey A."/>
            <person name="Walsh S.V."/>
            <person name="Warren T."/>
            <person name="Whitehead S."/>
            <person name="Woodward J.R."/>
            <person name="Volckaert G."/>
            <person name="Aert R."/>
            <person name="Robben J."/>
            <person name="Grymonprez B."/>
            <person name="Weltjens I."/>
            <person name="Vanstreels E."/>
            <person name="Rieger M."/>
            <person name="Schaefer M."/>
            <person name="Mueller-Auer S."/>
            <person name="Gabel C."/>
            <person name="Fuchs M."/>
            <person name="Duesterhoeft A."/>
            <person name="Fritzc C."/>
            <person name="Holzer E."/>
            <person name="Moestl D."/>
            <person name="Hilbert H."/>
            <person name="Borzym K."/>
            <person name="Langer I."/>
            <person name="Beck A."/>
            <person name="Lehrach H."/>
            <person name="Reinhardt R."/>
            <person name="Pohl T.M."/>
            <person name="Eger P."/>
            <person name="Zimmermann W."/>
            <person name="Wedler H."/>
            <person name="Wambutt R."/>
            <person name="Purnelle B."/>
            <person name="Goffeau A."/>
            <person name="Cadieu E."/>
            <person name="Dreano S."/>
            <person name="Gloux S."/>
            <person name="Lelaure V."/>
            <person name="Mottier S."/>
            <person name="Galibert F."/>
            <person name="Aves S.J."/>
            <person name="Xiang Z."/>
            <person name="Hunt C."/>
            <person name="Moore K."/>
            <person name="Hurst S.M."/>
            <person name="Lucas M."/>
            <person name="Rochet M."/>
            <person name="Gaillardin C."/>
            <person name="Tallada V.A."/>
            <person name="Garzon A."/>
            <person name="Thode G."/>
            <person name="Daga R.R."/>
            <person name="Cruzado L."/>
            <person name="Jimenez J."/>
            <person name="Sanchez M."/>
            <person name="del Rey F."/>
            <person name="Benito J."/>
            <person name="Dominguez A."/>
            <person name="Revuelta J.L."/>
            <person name="Moreno S."/>
            <person name="Armstrong J."/>
            <person name="Forsburg S.L."/>
            <person name="Cerutti L."/>
            <person name="Lowe T."/>
            <person name="McCombie W.R."/>
            <person name="Paulsen I."/>
            <person name="Potashkin J."/>
            <person name="Shpakovski G.V."/>
            <person name="Ussery D."/>
            <person name="Barrell B.G."/>
            <person name="Nurse P."/>
        </authorList>
    </citation>
    <scope>NUCLEOTIDE SEQUENCE [LARGE SCALE GENOMIC DNA]</scope>
    <source>
        <strain>972 / ATCC 24843</strain>
    </source>
</reference>
<reference key="3">
    <citation type="journal article" date="2006" name="Nat. Biotechnol.">
        <title>ORFeome cloning and global analysis of protein localization in the fission yeast Schizosaccharomyces pombe.</title>
        <authorList>
            <person name="Matsuyama A."/>
            <person name="Arai R."/>
            <person name="Yashiroda Y."/>
            <person name="Shirai A."/>
            <person name="Kamata A."/>
            <person name="Sekido S."/>
            <person name="Kobayashi Y."/>
            <person name="Hashimoto A."/>
            <person name="Hamamoto M."/>
            <person name="Hiraoka Y."/>
            <person name="Horinouchi S."/>
            <person name="Yoshida M."/>
        </authorList>
    </citation>
    <scope>SUBCELLULAR LOCATION [LARGE SCALE ANALYSIS]</scope>
</reference>
<reference key="4">
    <citation type="journal article" date="2008" name="J. Proteome Res.">
        <title>Phosphoproteome analysis of fission yeast.</title>
        <authorList>
            <person name="Wilson-Grady J.T."/>
            <person name="Villen J."/>
            <person name="Gygi S.P."/>
        </authorList>
    </citation>
    <scope>PHOSPHORYLATION [LARGE SCALE ANALYSIS] AT SER-21 AND SER-32</scope>
    <scope>IDENTIFICATION BY MASS SPECTROMETRY</scope>
</reference>
<gene>
    <name type="primary">rps13</name>
    <name type="ORF">SPAC6F6.07c</name>
</gene>
<keyword id="KW-0002">3D-structure</keyword>
<keyword id="KW-0963">Cytoplasm</keyword>
<keyword id="KW-0597">Phosphoprotein</keyword>
<keyword id="KW-1185">Reference proteome</keyword>
<keyword id="KW-0687">Ribonucleoprotein</keyword>
<keyword id="KW-0689">Ribosomal protein</keyword>
<feature type="initiator methionine" description="Removed" evidence="1">
    <location>
        <position position="1"/>
    </location>
</feature>
<feature type="chain" id="PRO_0000115688" description="Small ribosomal subunit protein uS15">
    <location>
        <begin position="2"/>
        <end position="151"/>
    </location>
</feature>
<feature type="modified residue" description="Phosphoserine" evidence="4">
    <location>
        <position position="21"/>
    </location>
</feature>
<feature type="modified residue" description="Phosphoserine" evidence="4">
    <location>
        <position position="32"/>
    </location>
</feature>
<comment type="function">
    <text evidence="2">Component of the ribosome, a large ribonucleoprotein complex responsible for the synthesis of proteins in the cell. The small ribosomal subunit (SSU) binds messenger RNAs (mRNAs) and translates the encoded message by selecting cognate aminoacyl-transfer RNA (tRNA) molecules. The large subunit (LSU) contains the ribosomal catalytic site termed the peptidyl transferase center (PTC), which catalyzes the formation of peptide bonds, thereby polymerizing the amino acids delivered by tRNAs into a polypeptide chain. The nascent polypeptides leave the ribosome through a tunnel in the LSU and interact with protein factors that function in enzymatic processing, targeting, and the membrane insertion of nascent chains at the exit of the ribosomal tunnel.</text>
</comment>
<comment type="subunit">
    <text evidence="2">Component of the small ribosomal subunit (SSU). Mature yeast ribosomes consist of a small (40S) and a large (60S) subunit. The 40S small subunit contains 1 molecule of ribosomal RNA (18S rRNA) and at least 33 different proteins. The large 60S subunit contains 3 rRNA molecules (25S, 5.8S and 5S rRNA) and at least 46 different proteins.</text>
</comment>
<comment type="subcellular location">
    <subcellularLocation>
        <location evidence="3">Cytoplasm</location>
    </subcellularLocation>
</comment>
<comment type="similarity">
    <text evidence="5">Belongs to the universal ribosomal protein uS15 family.</text>
</comment>
<sequence length="151" mass="16953">MGRMHSKGKGIASSALPYVRSPPAWCKADADSVVEQILKFSKKGMSPSQIGVTLRDSHGIPQVRFITGQKIMRILKANGLAPELPEDLYNLIKKAVSVRKHLERNRKDKDSKFRLILIESRIHRLARYYRKVGALPPTWKYESATASALVA</sequence>
<organism>
    <name type="scientific">Schizosaccharomyces pombe (strain 972 / ATCC 24843)</name>
    <name type="common">Fission yeast</name>
    <dbReference type="NCBI Taxonomy" id="284812"/>
    <lineage>
        <taxon>Eukaryota</taxon>
        <taxon>Fungi</taxon>
        <taxon>Dikarya</taxon>
        <taxon>Ascomycota</taxon>
        <taxon>Taphrinomycotina</taxon>
        <taxon>Schizosaccharomycetes</taxon>
        <taxon>Schizosaccharomycetales</taxon>
        <taxon>Schizosaccharomycetaceae</taxon>
        <taxon>Schizosaccharomyces</taxon>
    </lineage>
</organism>
<dbReference type="EMBL" id="X67030">
    <property type="protein sequence ID" value="CAA47424.1"/>
    <property type="molecule type" value="Genomic_DNA"/>
</dbReference>
<dbReference type="EMBL" id="CU329670">
    <property type="protein sequence ID" value="CAB11741.1"/>
    <property type="molecule type" value="Genomic_DNA"/>
</dbReference>
<dbReference type="PIR" id="S26296">
    <property type="entry name" value="S26296"/>
</dbReference>
<dbReference type="RefSeq" id="NP_593900.1">
    <property type="nucleotide sequence ID" value="NM_001019330.2"/>
</dbReference>
<dbReference type="PDB" id="9AXT">
    <property type="method" value="EM"/>
    <property type="resolution" value="2.40 A"/>
    <property type="chains" value="AQ=1-151"/>
</dbReference>
<dbReference type="PDB" id="9AXV">
    <property type="method" value="EM"/>
    <property type="resolution" value="2.40 A"/>
    <property type="chains" value="AQ=1-151"/>
</dbReference>
<dbReference type="PDBsum" id="9AXT"/>
<dbReference type="PDBsum" id="9AXV"/>
<dbReference type="EMDB" id="EMD-43972"/>
<dbReference type="EMDB" id="EMD-43976"/>
<dbReference type="SMR" id="P28189"/>
<dbReference type="BioGRID" id="278584">
    <property type="interactions" value="13"/>
</dbReference>
<dbReference type="FunCoup" id="P28189">
    <property type="interactions" value="546"/>
</dbReference>
<dbReference type="IntAct" id="P28189">
    <property type="interactions" value="4"/>
</dbReference>
<dbReference type="MINT" id="P28189"/>
<dbReference type="STRING" id="284812.P28189"/>
<dbReference type="iPTMnet" id="P28189"/>
<dbReference type="PaxDb" id="4896-SPAC6F6.07c.1"/>
<dbReference type="EnsemblFungi" id="SPAC6F6.07c.1">
    <property type="protein sequence ID" value="SPAC6F6.07c.1:pep"/>
    <property type="gene ID" value="SPAC6F6.07c"/>
</dbReference>
<dbReference type="GeneID" id="2542108"/>
<dbReference type="KEGG" id="spo:2542108"/>
<dbReference type="PomBase" id="SPAC6F6.07c">
    <property type="gene designation" value="rps13"/>
</dbReference>
<dbReference type="VEuPathDB" id="FungiDB:SPAC6F6.07c"/>
<dbReference type="eggNOG" id="KOG0400">
    <property type="taxonomic scope" value="Eukaryota"/>
</dbReference>
<dbReference type="HOGENOM" id="CLU_090139_2_0_1"/>
<dbReference type="InParanoid" id="P28189"/>
<dbReference type="OMA" id="MHTRRKG"/>
<dbReference type="PhylomeDB" id="P28189"/>
<dbReference type="Reactome" id="R-SPO-156827">
    <property type="pathway name" value="L13a-mediated translational silencing of Ceruloplasmin expression"/>
</dbReference>
<dbReference type="Reactome" id="R-SPO-1799339">
    <property type="pathway name" value="SRP-dependent cotranslational protein targeting to membrane"/>
</dbReference>
<dbReference type="Reactome" id="R-SPO-72649">
    <property type="pathway name" value="Translation initiation complex formation"/>
</dbReference>
<dbReference type="Reactome" id="R-SPO-72689">
    <property type="pathway name" value="Formation of a pool of free 40S subunits"/>
</dbReference>
<dbReference type="Reactome" id="R-SPO-72695">
    <property type="pathway name" value="Formation of the ternary complex, and subsequently, the 43S complex"/>
</dbReference>
<dbReference type="Reactome" id="R-SPO-72702">
    <property type="pathway name" value="Ribosomal scanning and start codon recognition"/>
</dbReference>
<dbReference type="Reactome" id="R-SPO-72706">
    <property type="pathway name" value="GTP hydrolysis and joining of the 60S ribosomal subunit"/>
</dbReference>
<dbReference type="Reactome" id="R-SPO-975956">
    <property type="pathway name" value="Nonsense Mediated Decay (NMD) independent of the Exon Junction Complex (EJC)"/>
</dbReference>
<dbReference type="Reactome" id="R-SPO-975957">
    <property type="pathway name" value="Nonsense Mediated Decay (NMD) enhanced by the Exon Junction Complex (EJC)"/>
</dbReference>
<dbReference type="PRO" id="PR:P28189"/>
<dbReference type="Proteomes" id="UP000002485">
    <property type="component" value="Chromosome I"/>
</dbReference>
<dbReference type="GO" id="GO:0005829">
    <property type="term" value="C:cytosol"/>
    <property type="evidence" value="ECO:0007005"/>
    <property type="project" value="PomBase"/>
</dbReference>
<dbReference type="GO" id="GO:0022627">
    <property type="term" value="C:cytosolic small ribosomal subunit"/>
    <property type="evidence" value="ECO:0000269"/>
    <property type="project" value="PomBase"/>
</dbReference>
<dbReference type="GO" id="GO:0005730">
    <property type="term" value="C:nucleolus"/>
    <property type="evidence" value="ECO:0000318"/>
    <property type="project" value="GO_Central"/>
</dbReference>
<dbReference type="GO" id="GO:0070181">
    <property type="term" value="F:small ribosomal subunit rRNA binding"/>
    <property type="evidence" value="ECO:0000318"/>
    <property type="project" value="GO_Central"/>
</dbReference>
<dbReference type="GO" id="GO:0003735">
    <property type="term" value="F:structural constituent of ribosome"/>
    <property type="evidence" value="ECO:0000318"/>
    <property type="project" value="GO_Central"/>
</dbReference>
<dbReference type="GO" id="GO:0002181">
    <property type="term" value="P:cytoplasmic translation"/>
    <property type="evidence" value="ECO:0000266"/>
    <property type="project" value="PomBase"/>
</dbReference>
<dbReference type="CDD" id="cd00353">
    <property type="entry name" value="Ribosomal_S15p_S13e"/>
    <property type="match status" value="1"/>
</dbReference>
<dbReference type="FunFam" id="1.10.287.10:FF:000003">
    <property type="entry name" value="40S ribosomal protein S13"/>
    <property type="match status" value="1"/>
</dbReference>
<dbReference type="FunFam" id="4.10.860.130:FF:000001">
    <property type="entry name" value="40S ribosomal protein S13"/>
    <property type="match status" value="1"/>
</dbReference>
<dbReference type="Gene3D" id="4.10.860.130">
    <property type="match status" value="1"/>
</dbReference>
<dbReference type="Gene3D" id="1.10.287.10">
    <property type="entry name" value="S15/NS1, RNA-binding"/>
    <property type="match status" value="1"/>
</dbReference>
<dbReference type="HAMAP" id="MF_01343_A">
    <property type="entry name" value="Ribosomal_uS15_A"/>
    <property type="match status" value="1"/>
</dbReference>
<dbReference type="InterPro" id="IPR000589">
    <property type="entry name" value="Ribosomal_uS15"/>
</dbReference>
<dbReference type="InterPro" id="IPR023029">
    <property type="entry name" value="Ribosomal_uS15_arc_euk"/>
</dbReference>
<dbReference type="InterPro" id="IPR012606">
    <property type="entry name" value="Ribosomal_uS15_N"/>
</dbReference>
<dbReference type="InterPro" id="IPR009068">
    <property type="entry name" value="uS15_NS1_RNA-bd_sf"/>
</dbReference>
<dbReference type="NCBIfam" id="NF006331">
    <property type="entry name" value="PRK08561.1"/>
    <property type="match status" value="1"/>
</dbReference>
<dbReference type="PANTHER" id="PTHR11885">
    <property type="entry name" value="RIBOSOMAL PROTEIN S15P/S13E"/>
    <property type="match status" value="1"/>
</dbReference>
<dbReference type="PANTHER" id="PTHR11885:SF6">
    <property type="entry name" value="SMALL RIBOSOMAL SUBUNIT PROTEIN US15"/>
    <property type="match status" value="1"/>
</dbReference>
<dbReference type="Pfam" id="PF08069">
    <property type="entry name" value="Ribosomal_S13_N"/>
    <property type="match status" value="1"/>
</dbReference>
<dbReference type="Pfam" id="PF00312">
    <property type="entry name" value="Ribosomal_S15"/>
    <property type="match status" value="1"/>
</dbReference>
<dbReference type="SMART" id="SM01386">
    <property type="entry name" value="Ribosomal_S13_N"/>
    <property type="match status" value="1"/>
</dbReference>
<dbReference type="SMART" id="SM01387">
    <property type="entry name" value="Ribosomal_S15"/>
    <property type="match status" value="1"/>
</dbReference>
<dbReference type="SUPFAM" id="SSF47060">
    <property type="entry name" value="S15/NS1 RNA-binding domain"/>
    <property type="match status" value="1"/>
</dbReference>
<dbReference type="PROSITE" id="PS00362">
    <property type="entry name" value="RIBOSOMAL_S15"/>
    <property type="match status" value="1"/>
</dbReference>
<proteinExistence type="evidence at protein level"/>